<feature type="chain" id="PRO_1000194549" description="tRNA pseudouridine synthase A">
    <location>
        <begin position="1"/>
        <end position="270"/>
    </location>
</feature>
<feature type="region of interest" description="RNA binding" evidence="1">
    <location>
        <begin position="107"/>
        <end position="111"/>
    </location>
</feature>
<feature type="region of interest" description="Interaction with tRNA" evidence="1">
    <location>
        <begin position="168"/>
        <end position="172"/>
    </location>
</feature>
<feature type="active site" description="Nucleophile" evidence="1">
    <location>
        <position position="60"/>
    </location>
</feature>
<feature type="binding site" evidence="1">
    <location>
        <position position="118"/>
    </location>
    <ligand>
        <name>substrate</name>
    </ligand>
</feature>
<feature type="site" description="Interaction with tRNA; Important for base-flipping" evidence="1">
    <location>
        <position position="58"/>
    </location>
</feature>
<feature type="site" description="Interaction with tRNA" evidence="1">
    <location>
        <position position="78"/>
    </location>
</feature>
<feature type="site" description="Interaction with tRNA" evidence="1">
    <location>
        <position position="110"/>
    </location>
</feature>
<feature type="site" description="Interaction with tRNA" evidence="1">
    <location>
        <position position="126"/>
    </location>
</feature>
<feature type="site" description="Interaction with tRNA" evidence="1">
    <location>
        <position position="139"/>
    </location>
</feature>
<dbReference type="EC" id="5.4.99.12" evidence="1"/>
<dbReference type="EMBL" id="CU928145">
    <property type="protein sequence ID" value="CAU98430.1"/>
    <property type="molecule type" value="Genomic_DNA"/>
</dbReference>
<dbReference type="RefSeq" id="WP_001283590.1">
    <property type="nucleotide sequence ID" value="NC_011748.1"/>
</dbReference>
<dbReference type="SMR" id="B7LBH2"/>
<dbReference type="GeneID" id="75172446"/>
<dbReference type="KEGG" id="eck:EC55989_2562"/>
<dbReference type="HOGENOM" id="CLU_014673_0_2_6"/>
<dbReference type="Proteomes" id="UP000000746">
    <property type="component" value="Chromosome"/>
</dbReference>
<dbReference type="GO" id="GO:0003723">
    <property type="term" value="F:RNA binding"/>
    <property type="evidence" value="ECO:0007669"/>
    <property type="project" value="InterPro"/>
</dbReference>
<dbReference type="GO" id="GO:0160147">
    <property type="term" value="F:tRNA pseudouridine(38-40) synthase activity"/>
    <property type="evidence" value="ECO:0007669"/>
    <property type="project" value="UniProtKB-EC"/>
</dbReference>
<dbReference type="GO" id="GO:0031119">
    <property type="term" value="P:tRNA pseudouridine synthesis"/>
    <property type="evidence" value="ECO:0007669"/>
    <property type="project" value="UniProtKB-UniRule"/>
</dbReference>
<dbReference type="CDD" id="cd02570">
    <property type="entry name" value="PseudoU_synth_EcTruA"/>
    <property type="match status" value="1"/>
</dbReference>
<dbReference type="FunFam" id="3.30.70.580:FF:000001">
    <property type="entry name" value="tRNA pseudouridine synthase A"/>
    <property type="match status" value="1"/>
</dbReference>
<dbReference type="FunFam" id="3.30.70.660:FF:000001">
    <property type="entry name" value="tRNA pseudouridine synthase A"/>
    <property type="match status" value="1"/>
</dbReference>
<dbReference type="Gene3D" id="3.30.70.660">
    <property type="entry name" value="Pseudouridine synthase I, catalytic domain, C-terminal subdomain"/>
    <property type="match status" value="1"/>
</dbReference>
<dbReference type="Gene3D" id="3.30.70.580">
    <property type="entry name" value="Pseudouridine synthase I, catalytic domain, N-terminal subdomain"/>
    <property type="match status" value="1"/>
</dbReference>
<dbReference type="HAMAP" id="MF_00171">
    <property type="entry name" value="TruA"/>
    <property type="match status" value="1"/>
</dbReference>
<dbReference type="InterPro" id="IPR020103">
    <property type="entry name" value="PsdUridine_synth_cat_dom_sf"/>
</dbReference>
<dbReference type="InterPro" id="IPR001406">
    <property type="entry name" value="PsdUridine_synth_TruA"/>
</dbReference>
<dbReference type="InterPro" id="IPR020097">
    <property type="entry name" value="PsdUridine_synth_TruA_a/b_dom"/>
</dbReference>
<dbReference type="InterPro" id="IPR020095">
    <property type="entry name" value="PsdUridine_synth_TruA_C"/>
</dbReference>
<dbReference type="InterPro" id="IPR020094">
    <property type="entry name" value="TruA/RsuA/RluB/E/F_N"/>
</dbReference>
<dbReference type="NCBIfam" id="TIGR00071">
    <property type="entry name" value="hisT_truA"/>
    <property type="match status" value="1"/>
</dbReference>
<dbReference type="PANTHER" id="PTHR11142">
    <property type="entry name" value="PSEUDOURIDYLATE SYNTHASE"/>
    <property type="match status" value="1"/>
</dbReference>
<dbReference type="PANTHER" id="PTHR11142:SF0">
    <property type="entry name" value="TRNA PSEUDOURIDINE SYNTHASE-LIKE 1"/>
    <property type="match status" value="1"/>
</dbReference>
<dbReference type="Pfam" id="PF01416">
    <property type="entry name" value="PseudoU_synth_1"/>
    <property type="match status" value="2"/>
</dbReference>
<dbReference type="PIRSF" id="PIRSF001430">
    <property type="entry name" value="tRNA_psdUrid_synth"/>
    <property type="match status" value="1"/>
</dbReference>
<dbReference type="SUPFAM" id="SSF55120">
    <property type="entry name" value="Pseudouridine synthase"/>
    <property type="match status" value="1"/>
</dbReference>
<sequence length="270" mass="30385">MSDQQQPPVYKIALGIEYDGSKYYGWQRQNEVRSVQEKLEKALSQVANEPITVFCAGRTDAGVHGTGQVVHFETTAQRKDAAWTLGVNANLPGDIAVRWVKAVPDDFHARFSATARRYRYIIYNHRLRPAVLSKGVTHFYEPLDAERMHRAAQCLLGENDFTSFRAVQCQSRTPWRNVMHINVTRHGPYVVVDIKANAFVHHMVRNIVGSLMEVGAHNQPESWIAELLAAKDRTLAAATAKAEGLYLVAVDYPDRYDLPKPPMGPLFLAD</sequence>
<accession>B7LBH2</accession>
<reference key="1">
    <citation type="journal article" date="2009" name="PLoS Genet.">
        <title>Organised genome dynamics in the Escherichia coli species results in highly diverse adaptive paths.</title>
        <authorList>
            <person name="Touchon M."/>
            <person name="Hoede C."/>
            <person name="Tenaillon O."/>
            <person name="Barbe V."/>
            <person name="Baeriswyl S."/>
            <person name="Bidet P."/>
            <person name="Bingen E."/>
            <person name="Bonacorsi S."/>
            <person name="Bouchier C."/>
            <person name="Bouvet O."/>
            <person name="Calteau A."/>
            <person name="Chiapello H."/>
            <person name="Clermont O."/>
            <person name="Cruveiller S."/>
            <person name="Danchin A."/>
            <person name="Diard M."/>
            <person name="Dossat C."/>
            <person name="Karoui M.E."/>
            <person name="Frapy E."/>
            <person name="Garry L."/>
            <person name="Ghigo J.M."/>
            <person name="Gilles A.M."/>
            <person name="Johnson J."/>
            <person name="Le Bouguenec C."/>
            <person name="Lescat M."/>
            <person name="Mangenot S."/>
            <person name="Martinez-Jehanne V."/>
            <person name="Matic I."/>
            <person name="Nassif X."/>
            <person name="Oztas S."/>
            <person name="Petit M.A."/>
            <person name="Pichon C."/>
            <person name="Rouy Z."/>
            <person name="Ruf C.S."/>
            <person name="Schneider D."/>
            <person name="Tourret J."/>
            <person name="Vacherie B."/>
            <person name="Vallenet D."/>
            <person name="Medigue C."/>
            <person name="Rocha E.P.C."/>
            <person name="Denamur E."/>
        </authorList>
    </citation>
    <scope>NUCLEOTIDE SEQUENCE [LARGE SCALE GENOMIC DNA]</scope>
    <source>
        <strain>55989 / EAEC</strain>
    </source>
</reference>
<name>TRUA_ECO55</name>
<gene>
    <name evidence="1" type="primary">truA</name>
    <name type="ordered locus">EC55989_2562</name>
</gene>
<protein>
    <recommendedName>
        <fullName evidence="1">tRNA pseudouridine synthase A</fullName>
        <ecNumber evidence="1">5.4.99.12</ecNumber>
    </recommendedName>
    <alternativeName>
        <fullName evidence="1">tRNA pseudouridine(38-40) synthase</fullName>
    </alternativeName>
    <alternativeName>
        <fullName evidence="1">tRNA pseudouridylate synthase I</fullName>
    </alternativeName>
    <alternativeName>
        <fullName evidence="1">tRNA-uridine isomerase I</fullName>
    </alternativeName>
</protein>
<evidence type="ECO:0000255" key="1">
    <source>
        <dbReference type="HAMAP-Rule" id="MF_00171"/>
    </source>
</evidence>
<comment type="function">
    <text evidence="1">Formation of pseudouridine at positions 38, 39 and 40 in the anticodon stem and loop of transfer RNAs.</text>
</comment>
<comment type="catalytic activity">
    <reaction evidence="1">
        <text>uridine(38/39/40) in tRNA = pseudouridine(38/39/40) in tRNA</text>
        <dbReference type="Rhea" id="RHEA:22376"/>
        <dbReference type="Rhea" id="RHEA-COMP:10085"/>
        <dbReference type="Rhea" id="RHEA-COMP:10087"/>
        <dbReference type="ChEBI" id="CHEBI:65314"/>
        <dbReference type="ChEBI" id="CHEBI:65315"/>
        <dbReference type="EC" id="5.4.99.12"/>
    </reaction>
</comment>
<comment type="subunit">
    <text evidence="1">Homodimer.</text>
</comment>
<comment type="similarity">
    <text evidence="1">Belongs to the tRNA pseudouridine synthase TruA family.</text>
</comment>
<organism>
    <name type="scientific">Escherichia coli (strain 55989 / EAEC)</name>
    <dbReference type="NCBI Taxonomy" id="585055"/>
    <lineage>
        <taxon>Bacteria</taxon>
        <taxon>Pseudomonadati</taxon>
        <taxon>Pseudomonadota</taxon>
        <taxon>Gammaproteobacteria</taxon>
        <taxon>Enterobacterales</taxon>
        <taxon>Enterobacteriaceae</taxon>
        <taxon>Escherichia</taxon>
    </lineage>
</organism>
<proteinExistence type="inferred from homology"/>
<keyword id="KW-0413">Isomerase</keyword>
<keyword id="KW-1185">Reference proteome</keyword>
<keyword id="KW-0819">tRNA processing</keyword>